<accession>Q57449</accession>
<accession>O05018</accession>
<dbReference type="EMBL" id="L42023">
    <property type="protein sequence ID" value="AAC22021.1"/>
    <property type="molecule type" value="Genomic_DNA"/>
</dbReference>
<dbReference type="PIR" id="G64063">
    <property type="entry name" value="G64063"/>
</dbReference>
<dbReference type="RefSeq" id="NP_438524.1">
    <property type="nucleotide sequence ID" value="NC_000907.1"/>
</dbReference>
<dbReference type="SMR" id="Q57449"/>
<dbReference type="STRING" id="71421.HI_0362"/>
<dbReference type="EnsemblBacteria" id="AAC22021">
    <property type="protein sequence ID" value="AAC22021"/>
    <property type="gene ID" value="HI_0362"/>
</dbReference>
<dbReference type="KEGG" id="hin:HI_0362"/>
<dbReference type="PATRIC" id="fig|71421.8.peg.380"/>
<dbReference type="eggNOG" id="COG0803">
    <property type="taxonomic scope" value="Bacteria"/>
</dbReference>
<dbReference type="HOGENOM" id="CLU_016838_1_1_6"/>
<dbReference type="OrthoDB" id="9793396at2"/>
<dbReference type="PhylomeDB" id="Q57449"/>
<dbReference type="BioCyc" id="HINF71421:G1GJ1-376-MONOMER"/>
<dbReference type="Proteomes" id="UP000000579">
    <property type="component" value="Chromosome"/>
</dbReference>
<dbReference type="GO" id="GO:0042597">
    <property type="term" value="C:periplasmic space"/>
    <property type="evidence" value="ECO:0007669"/>
    <property type="project" value="UniProtKB-SubCell"/>
</dbReference>
<dbReference type="GO" id="GO:0046872">
    <property type="term" value="F:metal ion binding"/>
    <property type="evidence" value="ECO:0007669"/>
    <property type="project" value="UniProtKB-KW"/>
</dbReference>
<dbReference type="GO" id="GO:0007155">
    <property type="term" value="P:cell adhesion"/>
    <property type="evidence" value="ECO:0007669"/>
    <property type="project" value="InterPro"/>
</dbReference>
<dbReference type="GO" id="GO:0030001">
    <property type="term" value="P:metal ion transport"/>
    <property type="evidence" value="ECO:0007669"/>
    <property type="project" value="InterPro"/>
</dbReference>
<dbReference type="CDD" id="cd01137">
    <property type="entry name" value="PsaA"/>
    <property type="match status" value="1"/>
</dbReference>
<dbReference type="Gene3D" id="3.40.50.1980">
    <property type="entry name" value="Nitrogenase molybdenum iron protein domain"/>
    <property type="match status" value="2"/>
</dbReference>
<dbReference type="InterPro" id="IPR006129">
    <property type="entry name" value="AdhesinB"/>
</dbReference>
<dbReference type="InterPro" id="IPR050492">
    <property type="entry name" value="Bact_metal-bind_prot9"/>
</dbReference>
<dbReference type="InterPro" id="IPR006128">
    <property type="entry name" value="Lipoprotein_PsaA-like"/>
</dbReference>
<dbReference type="InterPro" id="IPR006127">
    <property type="entry name" value="ZnuA-like"/>
</dbReference>
<dbReference type="PANTHER" id="PTHR42953">
    <property type="entry name" value="HIGH-AFFINITY ZINC UPTAKE SYSTEM PROTEIN ZNUA-RELATED"/>
    <property type="match status" value="1"/>
</dbReference>
<dbReference type="PANTHER" id="PTHR42953:SF1">
    <property type="entry name" value="METAL-BINDING PROTEIN HI_0362-RELATED"/>
    <property type="match status" value="1"/>
</dbReference>
<dbReference type="Pfam" id="PF01297">
    <property type="entry name" value="ZnuA"/>
    <property type="match status" value="1"/>
</dbReference>
<dbReference type="PRINTS" id="PR00691">
    <property type="entry name" value="ADHESINB"/>
</dbReference>
<dbReference type="PRINTS" id="PR00690">
    <property type="entry name" value="ADHESNFAMILY"/>
</dbReference>
<dbReference type="SUPFAM" id="SSF53807">
    <property type="entry name" value="Helical backbone' metal receptor"/>
    <property type="match status" value="1"/>
</dbReference>
<keyword id="KW-0903">Direct protein sequencing</keyword>
<keyword id="KW-0408">Iron</keyword>
<keyword id="KW-0479">Metal-binding</keyword>
<keyword id="KW-0574">Periplasm</keyword>
<keyword id="KW-1185">Reference proteome</keyword>
<keyword id="KW-0732">Signal</keyword>
<keyword id="KW-0813">Transport</keyword>
<name>Y362_HAEIN</name>
<sequence length="293" mass="32463">MRNSFKIMTALALGLFAMQANAKFKVVTTFTVIQDIAQNVAGNAATVESITKPGAEIHEYEPTPKDIVKAQSADLILWNGLNLERWFERFFQNVKDKPAVVVTEGIQPLSIYEGPYKDAPNPHAWMSPSNALIYIENIKNALVKYDPQNAAVYEKNAADYAQKIKQLDEPLRAKLAQIPEAQRWLVTSEGAFSYLAKDYNLKEGYLWPINAEQQGTPQQVRKVIDLVRKNNIPVVFSESTISAKPAQQVAKESGAKYGGVLYVDSLSAKNGPVPTYIDLLNVTVSTIVKGFGK</sequence>
<reference key="1">
    <citation type="journal article" date="1995" name="Science">
        <title>Whole-genome random sequencing and assembly of Haemophilus influenzae Rd.</title>
        <authorList>
            <person name="Fleischmann R.D."/>
            <person name="Adams M.D."/>
            <person name="White O."/>
            <person name="Clayton R.A."/>
            <person name="Kirkness E.F."/>
            <person name="Kerlavage A.R."/>
            <person name="Bult C.J."/>
            <person name="Tomb J.-F."/>
            <person name="Dougherty B.A."/>
            <person name="Merrick J.M."/>
            <person name="McKenney K."/>
            <person name="Sutton G.G."/>
            <person name="FitzHugh W."/>
            <person name="Fields C.A."/>
            <person name="Gocayne J.D."/>
            <person name="Scott J.D."/>
            <person name="Shirley R."/>
            <person name="Liu L.-I."/>
            <person name="Glodek A."/>
            <person name="Kelley J.M."/>
            <person name="Weidman J.F."/>
            <person name="Phillips C.A."/>
            <person name="Spriggs T."/>
            <person name="Hedblom E."/>
            <person name="Cotton M.D."/>
            <person name="Utterback T.R."/>
            <person name="Hanna M.C."/>
            <person name="Nguyen D.T."/>
            <person name="Saudek D.M."/>
            <person name="Brandon R.C."/>
            <person name="Fine L.D."/>
            <person name="Fritchman J.L."/>
            <person name="Fuhrmann J.L."/>
            <person name="Geoghagen N.S.M."/>
            <person name="Gnehm C.L."/>
            <person name="McDonald L.A."/>
            <person name="Small K.V."/>
            <person name="Fraser C.M."/>
            <person name="Smith H.O."/>
            <person name="Venter J.C."/>
        </authorList>
    </citation>
    <scope>NUCLEOTIDE SEQUENCE [LARGE SCALE GENOMIC DNA]</scope>
    <source>
        <strain>ATCC 51907 / DSM 11121 / KW20 / Rd</strain>
    </source>
</reference>
<reference key="2">
    <citation type="journal article" date="1992" name="J. Bacteriol.">
        <title>Identification of two iron-repressed periplasmic proteins in Haemophilus influenzae.</title>
        <authorList>
            <person name="Harkness R.E."/>
            <person name="Chong P."/>
            <person name="Klein M.H."/>
        </authorList>
    </citation>
    <scope>PROTEIN SEQUENCE OF 23-46</scope>
    <scope>SUBCELLULAR LOCATION</scope>
</reference>
<reference key="3">
    <citation type="journal article" date="2000" name="Electrophoresis">
        <title>Two-dimensional map of the proteome of Haemophilus influenzae.</title>
        <authorList>
            <person name="Langen H."/>
            <person name="Takacs B."/>
            <person name="Evers S."/>
            <person name="Berndt P."/>
            <person name="Lahm H.W."/>
            <person name="Wipf B."/>
            <person name="Gray C."/>
            <person name="Fountoulakis M."/>
        </authorList>
    </citation>
    <scope>IDENTIFICATION BY MASS SPECTROMETRY</scope>
    <source>
        <strain>ATCC 51907 / DSM 11121 / KW20 / Rd</strain>
    </source>
</reference>
<organism>
    <name type="scientific">Haemophilus influenzae (strain ATCC 51907 / DSM 11121 / KW20 / Rd)</name>
    <dbReference type="NCBI Taxonomy" id="71421"/>
    <lineage>
        <taxon>Bacteria</taxon>
        <taxon>Pseudomonadati</taxon>
        <taxon>Pseudomonadota</taxon>
        <taxon>Gammaproteobacteria</taxon>
        <taxon>Pasteurellales</taxon>
        <taxon>Pasteurellaceae</taxon>
        <taxon>Haemophilus</taxon>
    </lineage>
</organism>
<gene>
    <name type="ordered locus">HI_0362</name>
</gene>
<comment type="function">
    <text evidence="2">Part of an ATP-binding cassette (ABC) transport system involved in metal import (By similarity). Binds a metal with high affinity and specificity and delivers it to the membrane permease for translocation into the cytoplasm (By similarity).</text>
</comment>
<comment type="subcellular location">
    <subcellularLocation>
        <location evidence="3">Periplasm</location>
    </subcellularLocation>
</comment>
<comment type="similarity">
    <text evidence="4">Belongs to the bacterial solute-binding protein 9 family.</text>
</comment>
<protein>
    <recommendedName>
        <fullName>Putative metal-binding protein HI_0362</fullName>
    </recommendedName>
</protein>
<feature type="signal peptide" evidence="3">
    <location>
        <begin position="1"/>
        <end position="22"/>
    </location>
</feature>
<feature type="chain" id="PRO_0000031905" description="Putative metal-binding protein HI_0362">
    <location>
        <begin position="23"/>
        <end position="293"/>
    </location>
</feature>
<feature type="binding site" evidence="1">
    <location>
        <position position="58"/>
    </location>
    <ligand>
        <name>a divalent metal cation</name>
        <dbReference type="ChEBI" id="CHEBI:60240"/>
    </ligand>
</feature>
<feature type="binding site" evidence="1">
    <location>
        <position position="123"/>
    </location>
    <ligand>
        <name>a divalent metal cation</name>
        <dbReference type="ChEBI" id="CHEBI:60240"/>
    </ligand>
</feature>
<feature type="binding site" evidence="1">
    <location>
        <position position="189"/>
    </location>
    <ligand>
        <name>a divalent metal cation</name>
        <dbReference type="ChEBI" id="CHEBI:60240"/>
    </ligand>
</feature>
<feature type="binding site" evidence="1">
    <location>
        <position position="264"/>
    </location>
    <ligand>
        <name>a divalent metal cation</name>
        <dbReference type="ChEBI" id="CHEBI:60240"/>
    </ligand>
</feature>
<evidence type="ECO:0000250" key="1">
    <source>
        <dbReference type="UniProtKB" id="A1B2F3"/>
    </source>
</evidence>
<evidence type="ECO:0000250" key="2">
    <source>
        <dbReference type="UniProtKB" id="Q56952"/>
    </source>
</evidence>
<evidence type="ECO:0000269" key="3">
    <source>
    </source>
</evidence>
<evidence type="ECO:0000305" key="4"/>
<proteinExistence type="evidence at protein level"/>